<protein>
    <recommendedName>
        <fullName evidence="1">Ketol-acid reductoisomerase (NADP(+))</fullName>
        <shortName evidence="1">KARI</shortName>
        <ecNumber evidence="1">1.1.1.86</ecNumber>
    </recommendedName>
    <alternativeName>
        <fullName evidence="1">Acetohydroxy-acid isomeroreductase</fullName>
        <shortName evidence="1">AHIR</shortName>
    </alternativeName>
    <alternativeName>
        <fullName evidence="1">Alpha-keto-beta-hydroxylacyl reductoisomerase</fullName>
    </alternativeName>
    <alternativeName>
        <fullName evidence="1">Ketol-acid reductoisomerase type 1</fullName>
    </alternativeName>
    <alternativeName>
        <fullName evidence="1">Ketol-acid reductoisomerase type I</fullName>
    </alternativeName>
</protein>
<proteinExistence type="inferred from homology"/>
<gene>
    <name evidence="1" type="primary">ilvC</name>
    <name type="ordered locus">DET0831</name>
</gene>
<comment type="function">
    <text evidence="1">Involved in the biosynthesis of branched-chain amino acids (BCAA). Catalyzes an alkyl-migration followed by a ketol-acid reduction of (S)-2-acetolactate (S2AL) to yield (R)-2,3-dihydroxy-isovalerate. In the isomerase reaction, S2AL is rearranged via a Mg-dependent methyl migration to produce 3-hydroxy-3-methyl-2-ketobutyrate (HMKB). In the reductase reaction, this 2-ketoacid undergoes a metal-dependent reduction by NADPH to yield (R)-2,3-dihydroxy-isovalerate.</text>
</comment>
<comment type="catalytic activity">
    <reaction evidence="1">
        <text>(2R)-2,3-dihydroxy-3-methylbutanoate + NADP(+) = (2S)-2-acetolactate + NADPH + H(+)</text>
        <dbReference type="Rhea" id="RHEA:22068"/>
        <dbReference type="ChEBI" id="CHEBI:15378"/>
        <dbReference type="ChEBI" id="CHEBI:49072"/>
        <dbReference type="ChEBI" id="CHEBI:57783"/>
        <dbReference type="ChEBI" id="CHEBI:58349"/>
        <dbReference type="ChEBI" id="CHEBI:58476"/>
        <dbReference type="EC" id="1.1.1.86"/>
    </reaction>
</comment>
<comment type="catalytic activity">
    <reaction evidence="1">
        <text>(2R,3R)-2,3-dihydroxy-3-methylpentanoate + NADP(+) = (S)-2-ethyl-2-hydroxy-3-oxobutanoate + NADPH + H(+)</text>
        <dbReference type="Rhea" id="RHEA:13493"/>
        <dbReference type="ChEBI" id="CHEBI:15378"/>
        <dbReference type="ChEBI" id="CHEBI:49256"/>
        <dbReference type="ChEBI" id="CHEBI:49258"/>
        <dbReference type="ChEBI" id="CHEBI:57783"/>
        <dbReference type="ChEBI" id="CHEBI:58349"/>
        <dbReference type="EC" id="1.1.1.86"/>
    </reaction>
</comment>
<comment type="cofactor">
    <cofactor evidence="1">
        <name>Mg(2+)</name>
        <dbReference type="ChEBI" id="CHEBI:18420"/>
    </cofactor>
    <text evidence="1">Binds 2 magnesium ions per subunit.</text>
</comment>
<comment type="pathway">
    <text evidence="1">Amino-acid biosynthesis; L-isoleucine biosynthesis; L-isoleucine from 2-oxobutanoate: step 2/4.</text>
</comment>
<comment type="pathway">
    <text evidence="1">Amino-acid biosynthesis; L-valine biosynthesis; L-valine from pyruvate: step 2/4.</text>
</comment>
<comment type="similarity">
    <text evidence="1">Belongs to the ketol-acid reductoisomerase family.</text>
</comment>
<accession>Q3Z891</accession>
<evidence type="ECO:0000255" key="1">
    <source>
        <dbReference type="HAMAP-Rule" id="MF_00435"/>
    </source>
</evidence>
<evidence type="ECO:0000255" key="2">
    <source>
        <dbReference type="PROSITE-ProRule" id="PRU01197"/>
    </source>
</evidence>
<evidence type="ECO:0000255" key="3">
    <source>
        <dbReference type="PROSITE-ProRule" id="PRU01198"/>
    </source>
</evidence>
<sequence length="332" mass="36373">MAVIYYDKDCDLSLIEKKIIGIVGYGAQGHAHAQNLRDSGLKVIVACVEGGRGWKKATADGFEVMCVAEMAKKADIIMMLAPDTSQAKIYKDSVEQGLTPGKMLMFAHGFNIHYGQIVPPSFVDVTMIAPKCPGYMLRQVFTEGAGAPSLIAVEQDASGKAKEIALAYAKGIGSNRAGVLETTFAEETETDLFGEQAVLCGGTTSLVKAGFETLVEAGYQPEVAYFECLHELKLIVDLMYQGGIAYMRDSISDTAKYGDFTRGPRVINEETYETMGEILGEIQDGSFAKEWILENQAGRPVYNSLRRMESEHLIEEVGAELRSMMSWLKKKK</sequence>
<organism>
    <name type="scientific">Dehalococcoides mccartyi (strain ATCC BAA-2266 / KCTC 15142 / 195)</name>
    <name type="common">Dehalococcoides ethenogenes (strain 195)</name>
    <dbReference type="NCBI Taxonomy" id="243164"/>
    <lineage>
        <taxon>Bacteria</taxon>
        <taxon>Bacillati</taxon>
        <taxon>Chloroflexota</taxon>
        <taxon>Dehalococcoidia</taxon>
        <taxon>Dehalococcoidales</taxon>
        <taxon>Dehalococcoidaceae</taxon>
        <taxon>Dehalococcoides</taxon>
    </lineage>
</organism>
<dbReference type="EC" id="1.1.1.86" evidence="1"/>
<dbReference type="EMBL" id="CP000027">
    <property type="protein sequence ID" value="AAW39926.1"/>
    <property type="molecule type" value="Genomic_DNA"/>
</dbReference>
<dbReference type="RefSeq" id="WP_010936559.1">
    <property type="nucleotide sequence ID" value="NC_002936.3"/>
</dbReference>
<dbReference type="SMR" id="Q3Z891"/>
<dbReference type="FunCoup" id="Q3Z891">
    <property type="interactions" value="315"/>
</dbReference>
<dbReference type="STRING" id="243164.DET0831"/>
<dbReference type="GeneID" id="3229888"/>
<dbReference type="KEGG" id="det:DET0831"/>
<dbReference type="PATRIC" id="fig|243164.10.peg.789"/>
<dbReference type="eggNOG" id="COG0059">
    <property type="taxonomic scope" value="Bacteria"/>
</dbReference>
<dbReference type="HOGENOM" id="CLU_033821_0_1_0"/>
<dbReference type="InParanoid" id="Q3Z891"/>
<dbReference type="UniPathway" id="UPA00047">
    <property type="reaction ID" value="UER00056"/>
</dbReference>
<dbReference type="UniPathway" id="UPA00049">
    <property type="reaction ID" value="UER00060"/>
</dbReference>
<dbReference type="Proteomes" id="UP000008289">
    <property type="component" value="Chromosome"/>
</dbReference>
<dbReference type="GO" id="GO:0005829">
    <property type="term" value="C:cytosol"/>
    <property type="evidence" value="ECO:0007669"/>
    <property type="project" value="TreeGrafter"/>
</dbReference>
<dbReference type="GO" id="GO:0004455">
    <property type="term" value="F:ketol-acid reductoisomerase activity"/>
    <property type="evidence" value="ECO:0007669"/>
    <property type="project" value="UniProtKB-UniRule"/>
</dbReference>
<dbReference type="GO" id="GO:0000287">
    <property type="term" value="F:magnesium ion binding"/>
    <property type="evidence" value="ECO:0007669"/>
    <property type="project" value="UniProtKB-UniRule"/>
</dbReference>
<dbReference type="GO" id="GO:0050661">
    <property type="term" value="F:NADP binding"/>
    <property type="evidence" value="ECO:0007669"/>
    <property type="project" value="InterPro"/>
</dbReference>
<dbReference type="GO" id="GO:0009097">
    <property type="term" value="P:isoleucine biosynthetic process"/>
    <property type="evidence" value="ECO:0007669"/>
    <property type="project" value="UniProtKB-UniRule"/>
</dbReference>
<dbReference type="GO" id="GO:0009099">
    <property type="term" value="P:L-valine biosynthetic process"/>
    <property type="evidence" value="ECO:0007669"/>
    <property type="project" value="UniProtKB-UniRule"/>
</dbReference>
<dbReference type="FunFam" id="3.40.50.720:FF:000023">
    <property type="entry name" value="Ketol-acid reductoisomerase (NADP(+))"/>
    <property type="match status" value="1"/>
</dbReference>
<dbReference type="Gene3D" id="6.10.240.10">
    <property type="match status" value="1"/>
</dbReference>
<dbReference type="Gene3D" id="3.40.50.720">
    <property type="entry name" value="NAD(P)-binding Rossmann-like Domain"/>
    <property type="match status" value="1"/>
</dbReference>
<dbReference type="HAMAP" id="MF_00435">
    <property type="entry name" value="IlvC"/>
    <property type="match status" value="1"/>
</dbReference>
<dbReference type="InterPro" id="IPR008927">
    <property type="entry name" value="6-PGluconate_DH-like_C_sf"/>
</dbReference>
<dbReference type="InterPro" id="IPR013023">
    <property type="entry name" value="KARI"/>
</dbReference>
<dbReference type="InterPro" id="IPR000506">
    <property type="entry name" value="KARI_C"/>
</dbReference>
<dbReference type="InterPro" id="IPR013116">
    <property type="entry name" value="KARI_N"/>
</dbReference>
<dbReference type="InterPro" id="IPR014359">
    <property type="entry name" value="KARI_prok"/>
</dbReference>
<dbReference type="InterPro" id="IPR036291">
    <property type="entry name" value="NAD(P)-bd_dom_sf"/>
</dbReference>
<dbReference type="NCBIfam" id="TIGR00465">
    <property type="entry name" value="ilvC"/>
    <property type="match status" value="1"/>
</dbReference>
<dbReference type="NCBIfam" id="NF004017">
    <property type="entry name" value="PRK05479.1"/>
    <property type="match status" value="1"/>
</dbReference>
<dbReference type="NCBIfam" id="NF009940">
    <property type="entry name" value="PRK13403.1"/>
    <property type="match status" value="1"/>
</dbReference>
<dbReference type="PANTHER" id="PTHR21371">
    <property type="entry name" value="KETOL-ACID REDUCTOISOMERASE, MITOCHONDRIAL"/>
    <property type="match status" value="1"/>
</dbReference>
<dbReference type="PANTHER" id="PTHR21371:SF1">
    <property type="entry name" value="KETOL-ACID REDUCTOISOMERASE, MITOCHONDRIAL"/>
    <property type="match status" value="1"/>
</dbReference>
<dbReference type="Pfam" id="PF01450">
    <property type="entry name" value="KARI_C"/>
    <property type="match status" value="1"/>
</dbReference>
<dbReference type="Pfam" id="PF07991">
    <property type="entry name" value="KARI_N"/>
    <property type="match status" value="1"/>
</dbReference>
<dbReference type="PIRSF" id="PIRSF000116">
    <property type="entry name" value="IlvC_gammaproteo"/>
    <property type="match status" value="1"/>
</dbReference>
<dbReference type="SUPFAM" id="SSF48179">
    <property type="entry name" value="6-phosphogluconate dehydrogenase C-terminal domain-like"/>
    <property type="match status" value="1"/>
</dbReference>
<dbReference type="SUPFAM" id="SSF51735">
    <property type="entry name" value="NAD(P)-binding Rossmann-fold domains"/>
    <property type="match status" value="1"/>
</dbReference>
<dbReference type="PROSITE" id="PS51851">
    <property type="entry name" value="KARI_C"/>
    <property type="match status" value="1"/>
</dbReference>
<dbReference type="PROSITE" id="PS51850">
    <property type="entry name" value="KARI_N"/>
    <property type="match status" value="1"/>
</dbReference>
<name>ILVC_DEHM1</name>
<feature type="chain" id="PRO_0000226174" description="Ketol-acid reductoisomerase (NADP(+))">
    <location>
        <begin position="1"/>
        <end position="332"/>
    </location>
</feature>
<feature type="domain" description="KARI N-terminal Rossmann" evidence="2">
    <location>
        <begin position="1"/>
        <end position="182"/>
    </location>
</feature>
<feature type="domain" description="KARI C-terminal knotted" evidence="3">
    <location>
        <begin position="183"/>
        <end position="328"/>
    </location>
</feature>
<feature type="active site" evidence="1">
    <location>
        <position position="108"/>
    </location>
</feature>
<feature type="binding site" evidence="1">
    <location>
        <begin position="25"/>
        <end position="28"/>
    </location>
    <ligand>
        <name>NADP(+)</name>
        <dbReference type="ChEBI" id="CHEBI:58349"/>
    </ligand>
</feature>
<feature type="binding site" evidence="1">
    <location>
        <begin position="83"/>
        <end position="86"/>
    </location>
    <ligand>
        <name>NADP(+)</name>
        <dbReference type="ChEBI" id="CHEBI:58349"/>
    </ligand>
</feature>
<feature type="binding site" evidence="1">
    <location>
        <position position="134"/>
    </location>
    <ligand>
        <name>NADP(+)</name>
        <dbReference type="ChEBI" id="CHEBI:58349"/>
    </ligand>
</feature>
<feature type="binding site" evidence="1">
    <location>
        <position position="191"/>
    </location>
    <ligand>
        <name>Mg(2+)</name>
        <dbReference type="ChEBI" id="CHEBI:18420"/>
        <label>1</label>
    </ligand>
</feature>
<feature type="binding site" evidence="1">
    <location>
        <position position="191"/>
    </location>
    <ligand>
        <name>Mg(2+)</name>
        <dbReference type="ChEBI" id="CHEBI:18420"/>
        <label>2</label>
    </ligand>
</feature>
<feature type="binding site" evidence="1">
    <location>
        <position position="195"/>
    </location>
    <ligand>
        <name>Mg(2+)</name>
        <dbReference type="ChEBI" id="CHEBI:18420"/>
        <label>1</label>
    </ligand>
</feature>
<feature type="binding site" evidence="1">
    <location>
        <position position="227"/>
    </location>
    <ligand>
        <name>Mg(2+)</name>
        <dbReference type="ChEBI" id="CHEBI:18420"/>
        <label>2</label>
    </ligand>
</feature>
<feature type="binding site" evidence="1">
    <location>
        <position position="231"/>
    </location>
    <ligand>
        <name>Mg(2+)</name>
        <dbReference type="ChEBI" id="CHEBI:18420"/>
        <label>2</label>
    </ligand>
</feature>
<feature type="binding site" evidence="1">
    <location>
        <position position="252"/>
    </location>
    <ligand>
        <name>substrate</name>
    </ligand>
</feature>
<keyword id="KW-0028">Amino-acid biosynthesis</keyword>
<keyword id="KW-0100">Branched-chain amino acid biosynthesis</keyword>
<keyword id="KW-0460">Magnesium</keyword>
<keyword id="KW-0479">Metal-binding</keyword>
<keyword id="KW-0521">NADP</keyword>
<keyword id="KW-0560">Oxidoreductase</keyword>
<reference key="1">
    <citation type="journal article" date="2005" name="Science">
        <title>Genome sequence of the PCE-dechlorinating bacterium Dehalococcoides ethenogenes.</title>
        <authorList>
            <person name="Seshadri R."/>
            <person name="Adrian L."/>
            <person name="Fouts D.E."/>
            <person name="Eisen J.A."/>
            <person name="Phillippy A.M."/>
            <person name="Methe B.A."/>
            <person name="Ward N.L."/>
            <person name="Nelson W.C."/>
            <person name="DeBoy R.T."/>
            <person name="Khouri H.M."/>
            <person name="Kolonay J.F."/>
            <person name="Dodson R.J."/>
            <person name="Daugherty S.C."/>
            <person name="Brinkac L.M."/>
            <person name="Sullivan S.A."/>
            <person name="Madupu R."/>
            <person name="Nelson K.E."/>
            <person name="Kang K.H."/>
            <person name="Impraim M."/>
            <person name="Tran K."/>
            <person name="Robinson J.M."/>
            <person name="Forberger H.A."/>
            <person name="Fraser C.M."/>
            <person name="Zinder S.H."/>
            <person name="Heidelberg J.F."/>
        </authorList>
    </citation>
    <scope>NUCLEOTIDE SEQUENCE [LARGE SCALE GENOMIC DNA]</scope>
    <source>
        <strain>ATCC BAA-2266 / KCTC 15142 / 195</strain>
    </source>
</reference>